<organism>
    <name type="scientific">Homo sapiens</name>
    <name type="common">Human</name>
    <dbReference type="NCBI Taxonomy" id="9606"/>
    <lineage>
        <taxon>Eukaryota</taxon>
        <taxon>Metazoa</taxon>
        <taxon>Chordata</taxon>
        <taxon>Craniata</taxon>
        <taxon>Vertebrata</taxon>
        <taxon>Euteleostomi</taxon>
        <taxon>Mammalia</taxon>
        <taxon>Eutheria</taxon>
        <taxon>Euarchontoglires</taxon>
        <taxon>Primates</taxon>
        <taxon>Haplorrhini</taxon>
        <taxon>Catarrhini</taxon>
        <taxon>Hominidae</taxon>
        <taxon>Homo</taxon>
    </lineage>
</organism>
<name>RNF26_HUMAN</name>
<proteinExistence type="evidence at protein level"/>
<reference key="1">
    <citation type="journal article" date="2001" name="Biochem. Biophys. Res. Commun.">
        <title>Molecular cloning and characterization of RNF26 on human chromosome 11q23 region, encoding a novel RING finger protein with leucine zipper.</title>
        <authorList>
            <person name="Katoh M."/>
        </authorList>
    </citation>
    <scope>NUCLEOTIDE SEQUENCE [MRNA]</scope>
    <scope>TISSUE SPECIFICITY</scope>
</reference>
<reference key="2">
    <citation type="journal article" date="2005" name="DNA Res.">
        <title>Signal sequence and keyword trap in silico for selection of full-length human cDNAs encoding secretion or membrane proteins from oligo-capped cDNA libraries.</title>
        <authorList>
            <person name="Otsuki T."/>
            <person name="Ota T."/>
            <person name="Nishikawa T."/>
            <person name="Hayashi K."/>
            <person name="Suzuki Y."/>
            <person name="Yamamoto J."/>
            <person name="Wakamatsu A."/>
            <person name="Kimura K."/>
            <person name="Sakamoto K."/>
            <person name="Hatano N."/>
            <person name="Kawai Y."/>
            <person name="Ishii S."/>
            <person name="Saito K."/>
            <person name="Kojima S."/>
            <person name="Sugiyama T."/>
            <person name="Ono T."/>
            <person name="Okano K."/>
            <person name="Yoshikawa Y."/>
            <person name="Aotsuka S."/>
            <person name="Sasaki N."/>
            <person name="Hattori A."/>
            <person name="Okumura K."/>
            <person name="Nagai K."/>
            <person name="Sugano S."/>
            <person name="Isogai T."/>
        </authorList>
    </citation>
    <scope>NUCLEOTIDE SEQUENCE [LARGE SCALE MRNA]</scope>
</reference>
<reference key="3">
    <citation type="submission" date="2005-07" db="EMBL/GenBank/DDBJ databases">
        <authorList>
            <person name="Mural R.J."/>
            <person name="Istrail S."/>
            <person name="Sutton G.G."/>
            <person name="Florea L."/>
            <person name="Halpern A.L."/>
            <person name="Mobarry C.M."/>
            <person name="Lippert R."/>
            <person name="Walenz B."/>
            <person name="Shatkay H."/>
            <person name="Dew I."/>
            <person name="Miller J.R."/>
            <person name="Flanigan M.J."/>
            <person name="Edwards N.J."/>
            <person name="Bolanos R."/>
            <person name="Fasulo D."/>
            <person name="Halldorsson B.V."/>
            <person name="Hannenhalli S."/>
            <person name="Turner R."/>
            <person name="Yooseph S."/>
            <person name="Lu F."/>
            <person name="Nusskern D.R."/>
            <person name="Shue B.C."/>
            <person name="Zheng X.H."/>
            <person name="Zhong F."/>
            <person name="Delcher A.L."/>
            <person name="Huson D.H."/>
            <person name="Kravitz S.A."/>
            <person name="Mouchard L."/>
            <person name="Reinert K."/>
            <person name="Remington K.A."/>
            <person name="Clark A.G."/>
            <person name="Waterman M.S."/>
            <person name="Eichler E.E."/>
            <person name="Adams M.D."/>
            <person name="Hunkapiller M.W."/>
            <person name="Myers E.W."/>
            <person name="Venter J.C."/>
        </authorList>
    </citation>
    <scope>NUCLEOTIDE SEQUENCE [LARGE SCALE GENOMIC DNA]</scope>
</reference>
<reference key="4">
    <citation type="journal article" date="2004" name="Genome Res.">
        <title>The status, quality, and expansion of the NIH full-length cDNA project: the Mammalian Gene Collection (MGC).</title>
        <authorList>
            <consortium name="The MGC Project Team"/>
        </authorList>
    </citation>
    <scope>NUCLEOTIDE SEQUENCE [LARGE SCALE MRNA]</scope>
    <source>
        <tissue>Brain</tissue>
        <tissue>Muscle</tissue>
    </source>
</reference>
<reference key="5">
    <citation type="journal article" date="2011" name="PLoS ONE">
        <title>The inhibitor of growth protein 5 (ING5) depends on INCA1 as a co-factor for its antiproliferative effects.</title>
        <authorList>
            <person name="Zhang F."/>
            <person name="Baeumer N."/>
            <person name="Rode M."/>
            <person name="Ji P."/>
            <person name="Zhang T."/>
            <person name="Berdel W.E."/>
            <person name="Mueller-Tidow C."/>
        </authorList>
    </citation>
    <scope>INTERACTION WITH INCA1</scope>
</reference>
<reference key="6">
    <citation type="journal article" date="2014" name="PLoS Pathog.">
        <title>RNF26 temporally regulates virus-triggered type I interferon induction by two distinct mechanisms.</title>
        <authorList>
            <person name="Qin Y."/>
            <person name="Zhou M.T."/>
            <person name="Hu M.M."/>
            <person name="Hu Y.H."/>
            <person name="Zhang J."/>
            <person name="Guo L."/>
            <person name="Zhong B."/>
            <person name="Shu H.B."/>
        </authorList>
    </citation>
    <scope>FUNCTION</scope>
    <scope>CATALYTIC ACTIVITY</scope>
    <scope>PATHWAY</scope>
    <scope>SUBCELLULAR LOCATION</scope>
    <scope>MUTAGENESIS OF CYS-395; CYS-399 AND CYS-401</scope>
</reference>
<reference key="7">
    <citation type="journal article" date="2016" name="Cell">
        <title>An ER-associated pathway defines endosomal architecture for controlled cargo transport.</title>
        <authorList>
            <person name="Jongsma M.L."/>
            <person name="Berlin I."/>
            <person name="Wijdeven R.H."/>
            <person name="Janssen L."/>
            <person name="Janssen G.M."/>
            <person name="Garstka M.A."/>
            <person name="Janssen H."/>
            <person name="Mensink M."/>
            <person name="van Veelen P.A."/>
            <person name="Spaapen R.M."/>
            <person name="Neefjes J."/>
        </authorList>
    </citation>
    <scope>FUNCTION</scope>
    <scope>CATALYTIC ACTIVITY</scope>
    <scope>PATHWAY</scope>
    <scope>SUBCELLULAR LOCATION</scope>
    <scope>MUTAGENESIS OF ILE-382</scope>
</reference>
<reference key="8">
    <citation type="journal article" date="2020" name="Elife">
        <title>Interaction mapping of endoplasmic reticulum ubiquitin ligases identifies modulators of innate immune signalling.</title>
        <authorList>
            <person name="Fenech E.J."/>
            <person name="Lari F."/>
            <person name="Charles P.D."/>
            <person name="Fischer R."/>
            <person name="Laetitia-Thezenas M."/>
            <person name="Bagola K."/>
            <person name="Paton A.W."/>
            <person name="Paton J.C."/>
            <person name="Gyrd-Hansen M."/>
            <person name="Kessler B.M."/>
            <person name="Christianson J.C."/>
        </authorList>
    </citation>
    <scope>FUNCTION</scope>
    <scope>INTERACTION WITH TMEM43; ENDOD1; TMEM33 AND TMED1</scope>
    <scope>MUTAGENESIS OF TYR-432</scope>
    <scope>SUBCELLULAR LOCATION</scope>
</reference>
<reference key="9">
    <citation type="journal article" date="2021" name="Cell Rep.">
        <title>The ER-embedded UBE2J1/RNF26 ubiquitylation complex exerts spatiotemporal control over the endolysosomal pathway.</title>
        <authorList>
            <person name="Cremer T."/>
            <person name="Jongsma M.L.M."/>
            <person name="Trulsson F."/>
            <person name="Vertegaal A.C.O."/>
            <person name="Neefjes J."/>
            <person name="Berlin I."/>
        </authorList>
    </citation>
    <scope>FUNCTION</scope>
    <scope>SUBCELLULAR LOCATION</scope>
    <scope>INTERACTION WITH UBE2J1</scope>
    <scope>CATALYTIC ACTIVITY</scope>
</reference>
<accession>Q9BY78</accession>
<accession>Q542Y8</accession>
<comment type="function">
    <text evidence="5 6 7 8">E3 ubiquitin-protein ligase that plays a key role in endosome organization by retaining vesicles in the perinuclear cloud (PubMed:27368102). Acts as a platform for perinuclear positioning of the endosomal system by mediating ubiquitination of SQSTM1 through interaction with the ubiquitin conjugating enzyme UBE2J1 (PubMed:27368102, PubMed:33472082). Ubiquitinated SQSTM1 attracts specific vesicle-associated adapters, forming a molecular bridge that restrains cognate vesicles in the perinuclear region and organizes the endosomal pathway for efficient cargo transport (PubMed:27368102, PubMed:33472082). Also acts as a regulator of type I interferon production in response to viral infection by mediating the formation of 'Lys-11'-linked polyubiquitin chains on TMEM173/STING, leading to stabilize TMEM173/STING (PubMed:25254379, PubMed:32614325). Also required to limit type I interferon response by promoting autophagic degradation of IRF3 (PubMed:25254379).</text>
</comment>
<comment type="catalytic activity">
    <reaction evidence="5 6">
        <text>S-ubiquitinyl-[E2 ubiquitin-conjugating enzyme]-L-cysteine + [acceptor protein]-L-lysine = [E2 ubiquitin-conjugating enzyme]-L-cysteine + N(6)-ubiquitinyl-[acceptor protein]-L-lysine.</text>
        <dbReference type="EC" id="2.3.2.27"/>
    </reaction>
</comment>
<comment type="pathway">
    <text evidence="5 6">Protein modification; protein ubiquitination.</text>
</comment>
<comment type="subunit">
    <text evidence="4 7 8">Interacts with INCA1 (PubMed:21750715). Interacts with TMEM43, ENDOD1, TMEM33 and TMED1 to form a complex capable of modulating innate immune signaling through the cGAS-STING pathway (PubMed:32614325). Interacts with UBE2J1; this interaction is important for SQSTM1 ubiquitination (PubMed:33472082).</text>
</comment>
<comment type="interaction">
    <interactant intactId="EBI-2129375">
        <id>Q9BY78</id>
    </interactant>
    <interactant intactId="EBI-295644">
        <id>P11802</id>
        <label>CDK4</label>
    </interactant>
    <organismsDiffer>false</organismsDiffer>
    <experiments>4</experiments>
</comment>
<comment type="interaction">
    <interactant intactId="EBI-2129375">
        <id>Q9BY78</id>
    </interactant>
    <interactant intactId="EBI-6509505">
        <id>Q0VD86</id>
        <label>INCA1</label>
    </interactant>
    <organismsDiffer>false</organismsDiffer>
    <experiments>2</experiments>
</comment>
<comment type="interaction">
    <interactant intactId="EBI-2129375">
        <id>Q9BY78</id>
    </interactant>
    <interactant intactId="EBI-1047085">
        <id>Q92574</id>
        <label>TSC1</label>
    </interactant>
    <organismsDiffer>false</organismsDiffer>
    <experiments>9</experiments>
</comment>
<comment type="subcellular location">
    <subcellularLocation>
        <location evidence="5 6 7">Endoplasmic reticulum membrane</location>
        <topology evidence="1">Multi-pass membrane protein</topology>
    </subcellularLocation>
</comment>
<comment type="tissue specificity">
    <text evidence="3">Ubiquitous. Up-regulated in several cancer cell lines.</text>
</comment>
<keyword id="KW-0256">Endoplasmic reticulum</keyword>
<keyword id="KW-0472">Membrane</keyword>
<keyword id="KW-0479">Metal-binding</keyword>
<keyword id="KW-1267">Proteomics identification</keyword>
<keyword id="KW-1185">Reference proteome</keyword>
<keyword id="KW-0808">Transferase</keyword>
<keyword id="KW-0812">Transmembrane</keyword>
<keyword id="KW-1133">Transmembrane helix</keyword>
<keyword id="KW-0833">Ubl conjugation pathway</keyword>
<keyword id="KW-0862">Zinc</keyword>
<keyword id="KW-0863">Zinc-finger</keyword>
<sequence>MEAVYLVVNGLGLVLDVLTLVLDLNFLLVSSLLASLAWLLAFVYNLPHTVLTSLLHLGRGVLLSLLALIEAVVRFTCGGLQALCTLLYSCCSGLESLKLLGHLASHGALRSREILHRGVLNVVSSGHALLRQACDICAIAMSLVAYVINSLVNICLIGTQNLFSLVLALWDAVTGPLWRMTDVVAAFLAHISSSAVAMAILLWTPCQLALELLASAARLLASFVLVNLTGLVLLACVLAVTVTVLHPDFTLRLATQALSQLHARPSYHRLREDVMRLSRLALGSEAWRRVWSRSLQLASWPNRGGAPGAPQGDPMRVFSVRTRRQDTLPEAGRRSEAEEEEARTIRVTPVRGRERLNEEEPPGGQDPWKLLKEQEERKKCVICQDQSKTVLLLPCRHLCLCQACTEILMRHPVYHRNCPLCRRGILQTLNVYL</sequence>
<dbReference type="EC" id="2.3.2.27" evidence="5 6 8"/>
<dbReference type="EMBL" id="AB055622">
    <property type="protein sequence ID" value="BAB40955.1"/>
    <property type="molecule type" value="mRNA"/>
</dbReference>
<dbReference type="EMBL" id="AK075379">
    <property type="protein sequence ID" value="BAC11580.1"/>
    <property type="molecule type" value="mRNA"/>
</dbReference>
<dbReference type="EMBL" id="CH471065">
    <property type="protein sequence ID" value="EAW67479.1"/>
    <property type="molecule type" value="Genomic_DNA"/>
</dbReference>
<dbReference type="EMBL" id="BC000058">
    <property type="protein sequence ID" value="AAH00058.1"/>
    <property type="molecule type" value="mRNA"/>
</dbReference>
<dbReference type="EMBL" id="BC007534">
    <property type="protein sequence ID" value="AAH07534.1"/>
    <property type="molecule type" value="mRNA"/>
</dbReference>
<dbReference type="CCDS" id="CCDS8419.1"/>
<dbReference type="PIR" id="JC7678">
    <property type="entry name" value="JC7678"/>
</dbReference>
<dbReference type="RefSeq" id="NP_114404.1">
    <property type="nucleotide sequence ID" value="NM_032015.5"/>
</dbReference>
<dbReference type="BioGRID" id="122549">
    <property type="interactions" value="71"/>
</dbReference>
<dbReference type="FunCoup" id="Q9BY78">
    <property type="interactions" value="290"/>
</dbReference>
<dbReference type="IntAct" id="Q9BY78">
    <property type="interactions" value="23"/>
</dbReference>
<dbReference type="MINT" id="Q9BY78"/>
<dbReference type="STRING" id="9606.ENSP00000312439"/>
<dbReference type="GlyGen" id="Q9BY78">
    <property type="glycosylation" value="1 site, 1 O-linked glycan (1 site)"/>
</dbReference>
<dbReference type="iPTMnet" id="Q9BY78"/>
<dbReference type="PhosphoSitePlus" id="Q9BY78"/>
<dbReference type="BioMuta" id="RNF26"/>
<dbReference type="DMDM" id="20139692"/>
<dbReference type="jPOST" id="Q9BY78"/>
<dbReference type="MassIVE" id="Q9BY78"/>
<dbReference type="PaxDb" id="9606-ENSP00000312439"/>
<dbReference type="PeptideAtlas" id="Q9BY78"/>
<dbReference type="ProteomicsDB" id="79600"/>
<dbReference type="Pumba" id="Q9BY78"/>
<dbReference type="Antibodypedia" id="18819">
    <property type="antibodies" value="109 antibodies from 21 providers"/>
</dbReference>
<dbReference type="DNASU" id="79102"/>
<dbReference type="Ensembl" id="ENST00000311413.5">
    <property type="protein sequence ID" value="ENSP00000312439.4"/>
    <property type="gene ID" value="ENSG00000173456.5"/>
</dbReference>
<dbReference type="GeneID" id="79102"/>
<dbReference type="KEGG" id="hsa:79102"/>
<dbReference type="MANE-Select" id="ENST00000311413.5">
    <property type="protein sequence ID" value="ENSP00000312439.4"/>
    <property type="RefSeq nucleotide sequence ID" value="NM_032015.5"/>
    <property type="RefSeq protein sequence ID" value="NP_114404.1"/>
</dbReference>
<dbReference type="UCSC" id="uc001pwh.4">
    <property type="organism name" value="human"/>
</dbReference>
<dbReference type="AGR" id="HGNC:14646"/>
<dbReference type="CTD" id="79102"/>
<dbReference type="DisGeNET" id="79102"/>
<dbReference type="GeneCards" id="RNF26"/>
<dbReference type="HGNC" id="HGNC:14646">
    <property type="gene designation" value="RNF26"/>
</dbReference>
<dbReference type="HPA" id="ENSG00000173456">
    <property type="expression patterns" value="Low tissue specificity"/>
</dbReference>
<dbReference type="MIM" id="606130">
    <property type="type" value="gene"/>
</dbReference>
<dbReference type="neXtProt" id="NX_Q9BY78"/>
<dbReference type="OpenTargets" id="ENSG00000173456"/>
<dbReference type="PharmGKB" id="PA34430"/>
<dbReference type="VEuPathDB" id="HostDB:ENSG00000173456"/>
<dbReference type="eggNOG" id="KOG4265">
    <property type="taxonomic scope" value="Eukaryota"/>
</dbReference>
<dbReference type="GeneTree" id="ENSGT00390000016584"/>
<dbReference type="HOGENOM" id="CLU_057705_0_0_1"/>
<dbReference type="InParanoid" id="Q9BY78"/>
<dbReference type="OMA" id="TAILLWT"/>
<dbReference type="OrthoDB" id="1711136at2759"/>
<dbReference type="PAN-GO" id="Q9BY78">
    <property type="GO annotations" value="3 GO annotations based on evolutionary models"/>
</dbReference>
<dbReference type="PhylomeDB" id="Q9BY78"/>
<dbReference type="TreeFam" id="TF331813"/>
<dbReference type="PathwayCommons" id="Q9BY78"/>
<dbReference type="SignaLink" id="Q9BY78"/>
<dbReference type="SIGNOR" id="Q9BY78"/>
<dbReference type="UniPathway" id="UPA00143"/>
<dbReference type="BioGRID-ORCS" id="79102">
    <property type="hits" value="28 hits in 1196 CRISPR screens"/>
</dbReference>
<dbReference type="ChiTaRS" id="RNF26">
    <property type="organism name" value="human"/>
</dbReference>
<dbReference type="GenomeRNAi" id="79102"/>
<dbReference type="Pharos" id="Q9BY78">
    <property type="development level" value="Tbio"/>
</dbReference>
<dbReference type="PRO" id="PR:Q9BY78"/>
<dbReference type="Proteomes" id="UP000005640">
    <property type="component" value="Chromosome 11"/>
</dbReference>
<dbReference type="RNAct" id="Q9BY78">
    <property type="molecule type" value="protein"/>
</dbReference>
<dbReference type="Bgee" id="ENSG00000173456">
    <property type="expression patterns" value="Expressed in ileal mucosa and 172 other cell types or tissues"/>
</dbReference>
<dbReference type="GO" id="GO:0005789">
    <property type="term" value="C:endoplasmic reticulum membrane"/>
    <property type="evidence" value="ECO:0000314"/>
    <property type="project" value="UniProtKB"/>
</dbReference>
<dbReference type="GO" id="GO:0061630">
    <property type="term" value="F:ubiquitin protein ligase activity"/>
    <property type="evidence" value="ECO:0000314"/>
    <property type="project" value="UniProtKB"/>
</dbReference>
<dbReference type="GO" id="GO:0008270">
    <property type="term" value="F:zinc ion binding"/>
    <property type="evidence" value="ECO:0000303"/>
    <property type="project" value="UniProtKB"/>
</dbReference>
<dbReference type="GO" id="GO:0007032">
    <property type="term" value="P:endosome organization"/>
    <property type="evidence" value="ECO:0000314"/>
    <property type="project" value="UniProtKB"/>
</dbReference>
<dbReference type="GO" id="GO:0050687">
    <property type="term" value="P:negative regulation of defense response to virus"/>
    <property type="evidence" value="ECO:0000314"/>
    <property type="project" value="UniProtKB"/>
</dbReference>
<dbReference type="GO" id="GO:0070979">
    <property type="term" value="P:protein K11-linked ubiquitination"/>
    <property type="evidence" value="ECO:0000314"/>
    <property type="project" value="UniProtKB"/>
</dbReference>
<dbReference type="GO" id="GO:1905719">
    <property type="term" value="P:protein localization to perinuclear region of cytoplasm"/>
    <property type="evidence" value="ECO:0000314"/>
    <property type="project" value="UniProtKB"/>
</dbReference>
<dbReference type="GO" id="GO:0016567">
    <property type="term" value="P:protein ubiquitination"/>
    <property type="evidence" value="ECO:0000314"/>
    <property type="project" value="UniProtKB"/>
</dbReference>
<dbReference type="GO" id="GO:0032479">
    <property type="term" value="P:regulation of type I interferon production"/>
    <property type="evidence" value="ECO:0000314"/>
    <property type="project" value="UniProtKB"/>
</dbReference>
<dbReference type="GO" id="GO:0006511">
    <property type="term" value="P:ubiquitin-dependent protein catabolic process"/>
    <property type="evidence" value="ECO:0000318"/>
    <property type="project" value="GO_Central"/>
</dbReference>
<dbReference type="CDD" id="cd16788">
    <property type="entry name" value="mRING-HC-C3HC5_RNF26"/>
    <property type="match status" value="1"/>
</dbReference>
<dbReference type="FunFam" id="3.30.40.10:FF:000387">
    <property type="entry name" value="RING finger protein 26"/>
    <property type="match status" value="1"/>
</dbReference>
<dbReference type="Gene3D" id="3.30.40.10">
    <property type="entry name" value="Zinc/RING finger domain, C3HC4 (zinc finger)"/>
    <property type="match status" value="1"/>
</dbReference>
<dbReference type="InterPro" id="IPR040089">
    <property type="entry name" value="RNF26_mRING-HC-C3HC5"/>
</dbReference>
<dbReference type="InterPro" id="IPR001841">
    <property type="entry name" value="Znf_RING"/>
</dbReference>
<dbReference type="InterPro" id="IPR013083">
    <property type="entry name" value="Znf_RING/FYVE/PHD"/>
</dbReference>
<dbReference type="PANTHER" id="PTHR22696">
    <property type="entry name" value="E3 UBIQUITIN-PROTEIN LIGASE RNF26"/>
    <property type="match status" value="1"/>
</dbReference>
<dbReference type="PANTHER" id="PTHR22696:SF1">
    <property type="entry name" value="E3 UBIQUITIN-PROTEIN LIGASE RNF26"/>
    <property type="match status" value="1"/>
</dbReference>
<dbReference type="Pfam" id="PF13920">
    <property type="entry name" value="zf-C3HC4_3"/>
    <property type="match status" value="1"/>
</dbReference>
<dbReference type="SUPFAM" id="SSF57850">
    <property type="entry name" value="RING/U-box"/>
    <property type="match status" value="1"/>
</dbReference>
<dbReference type="PROSITE" id="PS50089">
    <property type="entry name" value="ZF_RING_2"/>
    <property type="match status" value="1"/>
</dbReference>
<protein>
    <recommendedName>
        <fullName evidence="9">E3 ubiquitin-protein ligase RNF26</fullName>
        <ecNumber evidence="5 6 8">2.3.2.27</ecNumber>
    </recommendedName>
    <alternativeName>
        <fullName evidence="9">RING finger protein 26</fullName>
    </alternativeName>
</protein>
<gene>
    <name evidence="10" type="primary">RNF26</name>
</gene>
<evidence type="ECO:0000255" key="1"/>
<evidence type="ECO:0000255" key="2">
    <source>
        <dbReference type="PROSITE-ProRule" id="PRU00175"/>
    </source>
</evidence>
<evidence type="ECO:0000269" key="3">
    <source>
    </source>
</evidence>
<evidence type="ECO:0000269" key="4">
    <source>
    </source>
</evidence>
<evidence type="ECO:0000269" key="5">
    <source>
    </source>
</evidence>
<evidence type="ECO:0000269" key="6">
    <source>
    </source>
</evidence>
<evidence type="ECO:0000269" key="7">
    <source>
    </source>
</evidence>
<evidence type="ECO:0000269" key="8">
    <source>
    </source>
</evidence>
<evidence type="ECO:0000305" key="9"/>
<evidence type="ECO:0000312" key="10">
    <source>
        <dbReference type="HGNC" id="HGNC:14646"/>
    </source>
</evidence>
<feature type="chain" id="PRO_0000056068" description="E3 ubiquitin-protein ligase RNF26">
    <location>
        <begin position="1"/>
        <end position="433"/>
    </location>
</feature>
<feature type="transmembrane region" description="Helical" evidence="1">
    <location>
        <begin position="24"/>
        <end position="44"/>
    </location>
</feature>
<feature type="transmembrane region" description="Helical" evidence="1">
    <location>
        <begin position="60"/>
        <end position="80"/>
    </location>
</feature>
<feature type="transmembrane region" description="Helical" evidence="1">
    <location>
        <begin position="147"/>
        <end position="169"/>
    </location>
</feature>
<feature type="transmembrane region" description="Helical" evidence="1">
    <location>
        <begin position="183"/>
        <end position="203"/>
    </location>
</feature>
<feature type="transmembrane region" description="Helical" evidence="1">
    <location>
        <begin position="220"/>
        <end position="240"/>
    </location>
</feature>
<feature type="zinc finger region" description="RING-type" evidence="2">
    <location>
        <begin position="380"/>
        <end position="422"/>
    </location>
</feature>
<feature type="mutagenesis site" description="Strongly decreased E3 ubiquitin-protein ligase activity due to impaired interaction with E2 enzymes. Impaired ability to retain vesicles in the perinuclear cloud." evidence="6">
    <original>I</original>
    <variation>R</variation>
    <location>
        <position position="382"/>
    </location>
</feature>
<feature type="mutagenesis site" description="Strongly decreased E3 ubiquitin-protein ligase activity. Impaired ability to mediate ubiquitination of TMEM173/STING." evidence="5">
    <original>C</original>
    <variation>S</variation>
    <location>
        <position position="395"/>
    </location>
</feature>
<feature type="mutagenesis site" description="Strongly decreased E3 ubiquitin-protein ligase activity. Impaired ability to mediate ubiquitination of TMEM173/STING." evidence="5">
    <original>C</original>
    <variation>S</variation>
    <location>
        <position position="399"/>
    </location>
</feature>
<feature type="mutagenesis site" description="Strongly decreased E3 ubiquitin-protein ligase activity. Impaired ability to mediate ubiquitination of TMEM173/STING." evidence="5">
    <original>C</original>
    <variation>S</variation>
    <location>
        <position position="401"/>
    </location>
</feature>
<feature type="mutagenesis site" description="About 4-fold increase of stability (from 30 min to 2 hours)." evidence="7">
    <original>Y</original>
    <variation>A</variation>
    <location>
        <position position="432"/>
    </location>
</feature>